<name>NUOG_RICCN</name>
<reference key="1">
    <citation type="journal article" date="2001" name="Science">
        <title>Mechanisms of evolution in Rickettsia conorii and R. prowazekii.</title>
        <authorList>
            <person name="Ogata H."/>
            <person name="Audic S."/>
            <person name="Renesto-Audiffren P."/>
            <person name="Fournier P.-E."/>
            <person name="Barbe V."/>
            <person name="Samson D."/>
            <person name="Roux V."/>
            <person name="Cossart P."/>
            <person name="Weissenbach J."/>
            <person name="Claverie J.-M."/>
            <person name="Raoult D."/>
        </authorList>
    </citation>
    <scope>NUCLEOTIDE SEQUENCE [LARGE SCALE GENOMIC DNA]</scope>
    <source>
        <strain>ATCC VR-613 / Malish 7</strain>
    </source>
</reference>
<evidence type="ECO:0000250" key="1"/>
<evidence type="ECO:0000255" key="2">
    <source>
        <dbReference type="PROSITE-ProRule" id="PRU00465"/>
    </source>
</evidence>
<evidence type="ECO:0000255" key="3">
    <source>
        <dbReference type="PROSITE-ProRule" id="PRU01004"/>
    </source>
</evidence>
<evidence type="ECO:0000255" key="4">
    <source>
        <dbReference type="PROSITE-ProRule" id="PRU01184"/>
    </source>
</evidence>
<evidence type="ECO:0000305" key="5"/>
<accession>Q92G92</accession>
<protein>
    <recommendedName>
        <fullName>NADH-quinone oxidoreductase subunit G</fullName>
        <ecNumber>7.1.1.-</ecNumber>
    </recommendedName>
    <alternativeName>
        <fullName>NADH dehydrogenase I subunit G</fullName>
    </alternativeName>
    <alternativeName>
        <fullName>NDH-1 subunit G</fullName>
    </alternativeName>
</protein>
<proteinExistence type="inferred from homology"/>
<gene>
    <name type="primary">nuoG</name>
    <name type="ordered locus">RC1231</name>
</gene>
<comment type="function">
    <text evidence="1">NDH-1 shuttles electrons from NADH, via FMN and iron-sulfur (Fe-S) centers, to quinones in the respiratory chain. Couples the redox reaction to proton translocation (for every two electrons transferred, four hydrogen ions are translocated across the cytoplasmic membrane), and thus conserves the redox energy in a proton gradient (By similarity).</text>
</comment>
<comment type="catalytic activity">
    <reaction>
        <text>a quinone + NADH + 5 H(+)(in) = a quinol + NAD(+) + 4 H(+)(out)</text>
        <dbReference type="Rhea" id="RHEA:57888"/>
        <dbReference type="ChEBI" id="CHEBI:15378"/>
        <dbReference type="ChEBI" id="CHEBI:24646"/>
        <dbReference type="ChEBI" id="CHEBI:57540"/>
        <dbReference type="ChEBI" id="CHEBI:57945"/>
        <dbReference type="ChEBI" id="CHEBI:132124"/>
    </reaction>
</comment>
<comment type="cofactor">
    <cofactor evidence="1">
        <name>[2Fe-2S] cluster</name>
        <dbReference type="ChEBI" id="CHEBI:190135"/>
    </cofactor>
    <text evidence="1">Binds 1 [2Fe-2S] cluster per subunit.</text>
</comment>
<comment type="cofactor">
    <cofactor evidence="1">
        <name>[4Fe-4S] cluster</name>
        <dbReference type="ChEBI" id="CHEBI:49883"/>
    </cofactor>
    <text evidence="1">Binds 2 [4Fe-4S] clusters per subunit.</text>
</comment>
<comment type="similarity">
    <text evidence="5">Belongs to the complex I 75 kDa subunit family.</text>
</comment>
<comment type="sequence caution" evidence="5">
    <conflict type="erroneous initiation">
        <sequence resource="EMBL-CDS" id="AAL03769"/>
    </conflict>
</comment>
<feature type="chain" id="PRO_0000118561" description="NADH-quinone oxidoreductase subunit G">
    <location>
        <begin position="1"/>
        <end position="671"/>
    </location>
</feature>
<feature type="domain" description="2Fe-2S ferredoxin-type" evidence="2">
    <location>
        <begin position="1"/>
        <end position="78"/>
    </location>
</feature>
<feature type="domain" description="4Fe-4S His(Cys)3-ligated-type" evidence="4">
    <location>
        <begin position="78"/>
        <end position="117"/>
    </location>
</feature>
<feature type="domain" description="4Fe-4S Mo/W bis-MGD-type" evidence="3">
    <location>
        <begin position="215"/>
        <end position="271"/>
    </location>
</feature>
<feature type="binding site" evidence="1">
    <location>
        <position position="34"/>
    </location>
    <ligand>
        <name>[2Fe-2S] cluster</name>
        <dbReference type="ChEBI" id="CHEBI:190135"/>
    </ligand>
</feature>
<feature type="binding site" evidence="1">
    <location>
        <position position="45"/>
    </location>
    <ligand>
        <name>[2Fe-2S] cluster</name>
        <dbReference type="ChEBI" id="CHEBI:190135"/>
    </ligand>
</feature>
<feature type="binding site" evidence="1">
    <location>
        <position position="48"/>
    </location>
    <ligand>
        <name>[2Fe-2S] cluster</name>
        <dbReference type="ChEBI" id="CHEBI:190135"/>
    </ligand>
</feature>
<feature type="binding site" evidence="1">
    <location>
        <position position="62"/>
    </location>
    <ligand>
        <name>[2Fe-2S] cluster</name>
        <dbReference type="ChEBI" id="CHEBI:190135"/>
    </ligand>
</feature>
<feature type="binding site" evidence="4">
    <location>
        <position position="94"/>
    </location>
    <ligand>
        <name>[4Fe-4S] cluster</name>
        <dbReference type="ChEBI" id="CHEBI:49883"/>
        <label>1</label>
    </ligand>
</feature>
<feature type="binding site" evidence="4">
    <location>
        <position position="98"/>
    </location>
    <ligand>
        <name>[4Fe-4S] cluster</name>
        <dbReference type="ChEBI" id="CHEBI:49883"/>
        <label>1</label>
    </ligand>
</feature>
<feature type="binding site" evidence="4">
    <location>
        <position position="101"/>
    </location>
    <ligand>
        <name>[4Fe-4S] cluster</name>
        <dbReference type="ChEBI" id="CHEBI:49883"/>
        <label>1</label>
    </ligand>
</feature>
<feature type="binding site" evidence="4">
    <location>
        <position position="107"/>
    </location>
    <ligand>
        <name>[4Fe-4S] cluster</name>
        <dbReference type="ChEBI" id="CHEBI:49883"/>
        <label>1</label>
    </ligand>
</feature>
<feature type="binding site" evidence="1">
    <location>
        <position position="146"/>
    </location>
    <ligand>
        <name>[4Fe-4S] cluster</name>
        <dbReference type="ChEBI" id="CHEBI:49883"/>
        <label>2</label>
    </ligand>
</feature>
<feature type="binding site" evidence="1">
    <location>
        <position position="149"/>
    </location>
    <ligand>
        <name>[4Fe-4S] cluster</name>
        <dbReference type="ChEBI" id="CHEBI:49883"/>
        <label>2</label>
    </ligand>
</feature>
<feature type="binding site" evidence="1">
    <location>
        <position position="152"/>
    </location>
    <ligand>
        <name>[4Fe-4S] cluster</name>
        <dbReference type="ChEBI" id="CHEBI:49883"/>
        <label>2</label>
    </ligand>
</feature>
<feature type="binding site" evidence="1">
    <location>
        <position position="196"/>
    </location>
    <ligand>
        <name>[4Fe-4S] cluster</name>
        <dbReference type="ChEBI" id="CHEBI:49883"/>
        <label>2</label>
    </ligand>
</feature>
<keyword id="KW-0001">2Fe-2S</keyword>
<keyword id="KW-0004">4Fe-4S</keyword>
<keyword id="KW-0408">Iron</keyword>
<keyword id="KW-0411">Iron-sulfur</keyword>
<keyword id="KW-0479">Metal-binding</keyword>
<keyword id="KW-0520">NAD</keyword>
<keyword id="KW-0874">Quinone</keyword>
<keyword id="KW-1278">Translocase</keyword>
<dbReference type="EC" id="7.1.1.-"/>
<dbReference type="EMBL" id="AE006914">
    <property type="protein sequence ID" value="AAL03769.1"/>
    <property type="status" value="ALT_INIT"/>
    <property type="molecule type" value="Genomic_DNA"/>
</dbReference>
<dbReference type="PIR" id="G97853">
    <property type="entry name" value="G97853"/>
</dbReference>
<dbReference type="RefSeq" id="WP_041471777.1">
    <property type="nucleotide sequence ID" value="NC_003103.1"/>
</dbReference>
<dbReference type="SMR" id="Q92G92"/>
<dbReference type="GeneID" id="928385"/>
<dbReference type="KEGG" id="rco:RC1231"/>
<dbReference type="PATRIC" id="fig|272944.4.peg.1411"/>
<dbReference type="HOGENOM" id="CLU_000422_11_6_5"/>
<dbReference type="Proteomes" id="UP000000816">
    <property type="component" value="Chromosome"/>
</dbReference>
<dbReference type="GO" id="GO:0016020">
    <property type="term" value="C:membrane"/>
    <property type="evidence" value="ECO:0007669"/>
    <property type="project" value="InterPro"/>
</dbReference>
<dbReference type="GO" id="GO:0051537">
    <property type="term" value="F:2 iron, 2 sulfur cluster binding"/>
    <property type="evidence" value="ECO:0007669"/>
    <property type="project" value="UniProtKB-KW"/>
</dbReference>
<dbReference type="GO" id="GO:0051539">
    <property type="term" value="F:4 iron, 4 sulfur cluster binding"/>
    <property type="evidence" value="ECO:0007669"/>
    <property type="project" value="UniProtKB-KW"/>
</dbReference>
<dbReference type="GO" id="GO:0046872">
    <property type="term" value="F:metal ion binding"/>
    <property type="evidence" value="ECO:0007669"/>
    <property type="project" value="UniProtKB-KW"/>
</dbReference>
<dbReference type="GO" id="GO:0008137">
    <property type="term" value="F:NADH dehydrogenase (ubiquinone) activity"/>
    <property type="evidence" value="ECO:0007669"/>
    <property type="project" value="InterPro"/>
</dbReference>
<dbReference type="GO" id="GO:0048038">
    <property type="term" value="F:quinone binding"/>
    <property type="evidence" value="ECO:0007669"/>
    <property type="project" value="UniProtKB-KW"/>
</dbReference>
<dbReference type="GO" id="GO:0042773">
    <property type="term" value="P:ATP synthesis coupled electron transport"/>
    <property type="evidence" value="ECO:0007669"/>
    <property type="project" value="InterPro"/>
</dbReference>
<dbReference type="CDD" id="cd00207">
    <property type="entry name" value="fer2"/>
    <property type="match status" value="1"/>
</dbReference>
<dbReference type="CDD" id="cd02773">
    <property type="entry name" value="MopB_Res-Cmplx1_Nad11"/>
    <property type="match status" value="1"/>
</dbReference>
<dbReference type="FunFam" id="3.10.20.740:FF:000001">
    <property type="entry name" value="NADH-quinone oxidoreductase subunit G"/>
    <property type="match status" value="1"/>
</dbReference>
<dbReference type="FunFam" id="3.30.70.20:FF:000002">
    <property type="entry name" value="NADH-ubiquinone oxidoreductase 75 kDa subunit"/>
    <property type="match status" value="1"/>
</dbReference>
<dbReference type="Gene3D" id="3.10.20.740">
    <property type="match status" value="1"/>
</dbReference>
<dbReference type="Gene3D" id="3.30.70.20">
    <property type="match status" value="1"/>
</dbReference>
<dbReference type="Gene3D" id="3.40.50.740">
    <property type="match status" value="2"/>
</dbReference>
<dbReference type="Gene3D" id="3.40.228.10">
    <property type="entry name" value="Dimethylsulfoxide Reductase, domain 2"/>
    <property type="match status" value="1"/>
</dbReference>
<dbReference type="InterPro" id="IPR036010">
    <property type="entry name" value="2Fe-2S_ferredoxin-like_sf"/>
</dbReference>
<dbReference type="InterPro" id="IPR001041">
    <property type="entry name" value="2Fe-2S_ferredoxin-type"/>
</dbReference>
<dbReference type="InterPro" id="IPR006656">
    <property type="entry name" value="Mopterin_OxRdtase"/>
</dbReference>
<dbReference type="InterPro" id="IPR006963">
    <property type="entry name" value="Mopterin_OxRdtase_4Fe-4S_dom"/>
</dbReference>
<dbReference type="InterPro" id="IPR000283">
    <property type="entry name" value="NADH_UbQ_OxRdtase_75kDa_su_CS"/>
</dbReference>
<dbReference type="InterPro" id="IPR054351">
    <property type="entry name" value="NADH_UbQ_OxRdtase_ferredoxin"/>
</dbReference>
<dbReference type="InterPro" id="IPR010228">
    <property type="entry name" value="NADH_UbQ_OxRdtase_Gsu"/>
</dbReference>
<dbReference type="InterPro" id="IPR019574">
    <property type="entry name" value="NADH_UbQ_OxRdtase_Gsu_4Fe4S-bd"/>
</dbReference>
<dbReference type="InterPro" id="IPR015405">
    <property type="entry name" value="NDUFS1-like_C"/>
</dbReference>
<dbReference type="InterPro" id="IPR050123">
    <property type="entry name" value="Prok_molybdopt-oxidoreductase"/>
</dbReference>
<dbReference type="NCBIfam" id="TIGR01973">
    <property type="entry name" value="NuoG"/>
    <property type="match status" value="1"/>
</dbReference>
<dbReference type="PANTHER" id="PTHR43105:SF13">
    <property type="entry name" value="NADH-UBIQUINONE OXIDOREDUCTASE 75 KDA SUBUNIT, MITOCHONDRIAL"/>
    <property type="match status" value="1"/>
</dbReference>
<dbReference type="PANTHER" id="PTHR43105">
    <property type="entry name" value="RESPIRATORY NITRATE REDUCTASE"/>
    <property type="match status" value="1"/>
</dbReference>
<dbReference type="Pfam" id="PF13510">
    <property type="entry name" value="Fer2_4"/>
    <property type="match status" value="1"/>
</dbReference>
<dbReference type="Pfam" id="PF22151">
    <property type="entry name" value="Fer4_NDSU1"/>
    <property type="match status" value="1"/>
</dbReference>
<dbReference type="Pfam" id="PF22117">
    <property type="entry name" value="Fer4_Nqo3"/>
    <property type="match status" value="1"/>
</dbReference>
<dbReference type="Pfam" id="PF00384">
    <property type="entry name" value="Molybdopterin"/>
    <property type="match status" value="1"/>
</dbReference>
<dbReference type="Pfam" id="PF10588">
    <property type="entry name" value="NADH-G_4Fe-4S_3"/>
    <property type="match status" value="1"/>
</dbReference>
<dbReference type="Pfam" id="PF09326">
    <property type="entry name" value="NADH_dhqG_C"/>
    <property type="match status" value="1"/>
</dbReference>
<dbReference type="SMART" id="SM00929">
    <property type="entry name" value="NADH-G_4Fe-4S_3"/>
    <property type="match status" value="1"/>
</dbReference>
<dbReference type="SUPFAM" id="SSF54292">
    <property type="entry name" value="2Fe-2S ferredoxin-like"/>
    <property type="match status" value="1"/>
</dbReference>
<dbReference type="SUPFAM" id="SSF54862">
    <property type="entry name" value="4Fe-4S ferredoxins"/>
    <property type="match status" value="1"/>
</dbReference>
<dbReference type="SUPFAM" id="SSF53706">
    <property type="entry name" value="Formate dehydrogenase/DMSO reductase, domains 1-3"/>
    <property type="match status" value="1"/>
</dbReference>
<dbReference type="PROSITE" id="PS51085">
    <property type="entry name" value="2FE2S_FER_2"/>
    <property type="match status" value="1"/>
</dbReference>
<dbReference type="PROSITE" id="PS51839">
    <property type="entry name" value="4FE4S_HC3"/>
    <property type="match status" value="1"/>
</dbReference>
<dbReference type="PROSITE" id="PS51669">
    <property type="entry name" value="4FE4S_MOW_BIS_MGD"/>
    <property type="match status" value="1"/>
</dbReference>
<dbReference type="PROSITE" id="PS00641">
    <property type="entry name" value="COMPLEX1_75K_1"/>
    <property type="match status" value="1"/>
</dbReference>
<dbReference type="PROSITE" id="PS00642">
    <property type="entry name" value="COMPLEX1_75K_2"/>
    <property type="match status" value="1"/>
</dbReference>
<dbReference type="PROSITE" id="PS00643">
    <property type="entry name" value="COMPLEX1_75K_3"/>
    <property type="match status" value="1"/>
</dbReference>
<sequence>MIKLNVDGSEIEVSEGSTVYQACTQAGKEIPHFCYHQRLKIAGNCRMCLVEMEKSPKPIASCAMPVSNGMVIHTDTPMVKKAREGVMEFLLINHPLDCPICDQGGECNLQDQAFRYGKGTNRFHENKRSIKDKYMGPLIKTAMTRCIQCTRCIRFASDIAGIEEIGAIHRGEHIEVTSYLEQTLDSEISGNMIDICPVGALNSKPYAFKARKWELKHTASIGVHDAEGSNIRIDSRGDEVMRILPRVNEEINEEWLSDKNRFSYDGLKYQRLDRPYIRKNGKLVEASWSEALKTVADKIKSVKPEKIVAIAGSLSSVEAMFMLKTLLQKLGSNNYSVNQFDYKLDTMQRGNYLFNTTIAGIEKADLCLLIGANPRQIAPVLNSRIGMRVRADSLKVARIGGGHNQTYKIQDLGSDIKIIEELAIGTHEFTKALKAAKYLMIIVGDGVYARDDGYAILSLIHKIVTEYNIMRDDWKGFNILHNHASIVGGLDIGFNTPIKLEELELAYLLGTDAIPFDKLKSTFIIYQGHHGDAGASSADVILPAAAYTEQSGIYVNLEGRPQIAEKAVSPVGVAKEDIEIIKELAGYLKIDIGMDNLQEVRVRLAKEYKVFASIDRIIENKFSKFSSKDKLSKEPITAEPINYYMTDVISKNSVTMAKCVEAKEARDEEVA</sequence>
<organism>
    <name type="scientific">Rickettsia conorii (strain ATCC VR-613 / Malish 7)</name>
    <dbReference type="NCBI Taxonomy" id="272944"/>
    <lineage>
        <taxon>Bacteria</taxon>
        <taxon>Pseudomonadati</taxon>
        <taxon>Pseudomonadota</taxon>
        <taxon>Alphaproteobacteria</taxon>
        <taxon>Rickettsiales</taxon>
        <taxon>Rickettsiaceae</taxon>
        <taxon>Rickettsieae</taxon>
        <taxon>Rickettsia</taxon>
        <taxon>spotted fever group</taxon>
    </lineage>
</organism>